<name>DCUP_BACC2</name>
<reference key="1">
    <citation type="submission" date="2008-10" db="EMBL/GenBank/DDBJ databases">
        <title>Genome sequence of Bacillus cereus G9842.</title>
        <authorList>
            <person name="Dodson R.J."/>
            <person name="Durkin A.S."/>
            <person name="Rosovitz M.J."/>
            <person name="Rasko D.A."/>
            <person name="Hoffmaster A."/>
            <person name="Ravel J."/>
            <person name="Sutton G."/>
        </authorList>
    </citation>
    <scope>NUCLEOTIDE SEQUENCE [LARGE SCALE GENOMIC DNA]</scope>
    <source>
        <strain>G9842</strain>
    </source>
</reference>
<evidence type="ECO:0000255" key="1">
    <source>
        <dbReference type="HAMAP-Rule" id="MF_00218"/>
    </source>
</evidence>
<organism>
    <name type="scientific">Bacillus cereus (strain G9842)</name>
    <dbReference type="NCBI Taxonomy" id="405531"/>
    <lineage>
        <taxon>Bacteria</taxon>
        <taxon>Bacillati</taxon>
        <taxon>Bacillota</taxon>
        <taxon>Bacilli</taxon>
        <taxon>Bacillales</taxon>
        <taxon>Bacillaceae</taxon>
        <taxon>Bacillus</taxon>
        <taxon>Bacillus cereus group</taxon>
    </lineage>
</organism>
<keyword id="KW-0963">Cytoplasm</keyword>
<keyword id="KW-0210">Decarboxylase</keyword>
<keyword id="KW-0456">Lyase</keyword>
<keyword id="KW-0627">Porphyrin biosynthesis</keyword>
<accession>B7IKE2</accession>
<feature type="chain" id="PRO_1000197510" description="Uroporphyrinogen decarboxylase">
    <location>
        <begin position="1"/>
        <end position="348"/>
    </location>
</feature>
<feature type="binding site" evidence="1">
    <location>
        <begin position="27"/>
        <end position="31"/>
    </location>
    <ligand>
        <name>substrate</name>
    </ligand>
</feature>
<feature type="binding site" evidence="1">
    <location>
        <position position="46"/>
    </location>
    <ligand>
        <name>substrate</name>
    </ligand>
</feature>
<feature type="binding site" evidence="1">
    <location>
        <position position="76"/>
    </location>
    <ligand>
        <name>substrate</name>
    </ligand>
</feature>
<feature type="binding site" evidence="1">
    <location>
        <position position="152"/>
    </location>
    <ligand>
        <name>substrate</name>
    </ligand>
</feature>
<feature type="binding site" evidence="1">
    <location>
        <position position="207"/>
    </location>
    <ligand>
        <name>substrate</name>
    </ligand>
</feature>
<feature type="binding site" evidence="1">
    <location>
        <position position="320"/>
    </location>
    <ligand>
        <name>substrate</name>
    </ligand>
</feature>
<feature type="site" description="Transition state stabilizer" evidence="1">
    <location>
        <position position="76"/>
    </location>
</feature>
<comment type="function">
    <text evidence="1">Catalyzes the decarboxylation of four acetate groups of uroporphyrinogen-III to yield coproporphyrinogen-III.</text>
</comment>
<comment type="catalytic activity">
    <reaction evidence="1">
        <text>uroporphyrinogen III + 4 H(+) = coproporphyrinogen III + 4 CO2</text>
        <dbReference type="Rhea" id="RHEA:19865"/>
        <dbReference type="ChEBI" id="CHEBI:15378"/>
        <dbReference type="ChEBI" id="CHEBI:16526"/>
        <dbReference type="ChEBI" id="CHEBI:57308"/>
        <dbReference type="ChEBI" id="CHEBI:57309"/>
        <dbReference type="EC" id="4.1.1.37"/>
    </reaction>
</comment>
<comment type="pathway">
    <text evidence="1">Porphyrin-containing compound metabolism; protoporphyrin-IX biosynthesis; coproporphyrinogen-III from 5-aminolevulinate: step 4/4.</text>
</comment>
<comment type="subunit">
    <text evidence="1">Homodimer.</text>
</comment>
<comment type="subcellular location">
    <subcellularLocation>
        <location evidence="1">Cytoplasm</location>
    </subcellularLocation>
</comment>
<comment type="similarity">
    <text evidence="1">Belongs to the uroporphyrinogen decarboxylase family.</text>
</comment>
<protein>
    <recommendedName>
        <fullName evidence="1">Uroporphyrinogen decarboxylase</fullName>
        <shortName evidence="1">UPD</shortName>
        <shortName evidence="1">URO-D</shortName>
        <ecNumber evidence="1">4.1.1.37</ecNumber>
    </recommendedName>
</protein>
<gene>
    <name evidence="1" type="primary">hemE</name>
    <name type="ordered locus">BCG9842_B4202</name>
</gene>
<sequence length="348" mass="39209">MVRTINETFLKACRGERTDYVPAWYMRQAGRSQPEYRKIKEKYSLFEITHNPELCAYVTKLPVDQYNVDAAILYKDIMSPLPAIGVDVEIKSGIGPVIDNPIRSLQDVEKLGEINPEDDVPYILDTIRLLTTEMLDVPLIGFSGAPFTLASYMIEGGPSRNYHNTKAFMYAEPKAWFALMDKLADMVITYLKAQINAGAKAVQIFDSWVGTVNVADYRVFIKPAMERIFAEVRPMGVPMIMHGVGAAHLVNEWHDLPLDVVGLDWRLPIEEARARGVHKAVQGNMDPSFLLAPWSVIEEHVKGILDQGMKEPGYIFNLGHGVFPEVNPDTLKRLTTFIHEYSKGQLAK</sequence>
<dbReference type="EC" id="4.1.1.37" evidence="1"/>
<dbReference type="EMBL" id="CP001186">
    <property type="protein sequence ID" value="ACK97556.1"/>
    <property type="molecule type" value="Genomic_DNA"/>
</dbReference>
<dbReference type="RefSeq" id="WP_000252608.1">
    <property type="nucleotide sequence ID" value="NC_011772.1"/>
</dbReference>
<dbReference type="SMR" id="B7IKE2"/>
<dbReference type="KEGG" id="bcg:BCG9842_B4202"/>
<dbReference type="HOGENOM" id="CLU_040933_0_1_9"/>
<dbReference type="UniPathway" id="UPA00251">
    <property type="reaction ID" value="UER00321"/>
</dbReference>
<dbReference type="Proteomes" id="UP000006744">
    <property type="component" value="Chromosome"/>
</dbReference>
<dbReference type="GO" id="GO:0005829">
    <property type="term" value="C:cytosol"/>
    <property type="evidence" value="ECO:0007669"/>
    <property type="project" value="TreeGrafter"/>
</dbReference>
<dbReference type="GO" id="GO:0004853">
    <property type="term" value="F:uroporphyrinogen decarboxylase activity"/>
    <property type="evidence" value="ECO:0007669"/>
    <property type="project" value="UniProtKB-UniRule"/>
</dbReference>
<dbReference type="GO" id="GO:0006782">
    <property type="term" value="P:protoporphyrinogen IX biosynthetic process"/>
    <property type="evidence" value="ECO:0007669"/>
    <property type="project" value="UniProtKB-UniRule"/>
</dbReference>
<dbReference type="CDD" id="cd00717">
    <property type="entry name" value="URO-D"/>
    <property type="match status" value="1"/>
</dbReference>
<dbReference type="FunFam" id="3.20.20.210:FF:000005">
    <property type="entry name" value="Uroporphyrinogen decarboxylase"/>
    <property type="match status" value="1"/>
</dbReference>
<dbReference type="Gene3D" id="3.20.20.210">
    <property type="match status" value="1"/>
</dbReference>
<dbReference type="HAMAP" id="MF_00218">
    <property type="entry name" value="URO_D"/>
    <property type="match status" value="1"/>
</dbReference>
<dbReference type="InterPro" id="IPR038071">
    <property type="entry name" value="UROD/MetE-like_sf"/>
</dbReference>
<dbReference type="InterPro" id="IPR006361">
    <property type="entry name" value="Uroporphyrinogen_deCO2ase_HemE"/>
</dbReference>
<dbReference type="InterPro" id="IPR000257">
    <property type="entry name" value="Uroporphyrinogen_deCOase"/>
</dbReference>
<dbReference type="NCBIfam" id="TIGR01464">
    <property type="entry name" value="hemE"/>
    <property type="match status" value="1"/>
</dbReference>
<dbReference type="PANTHER" id="PTHR21091">
    <property type="entry name" value="METHYLTETRAHYDROFOLATE:HOMOCYSTEINE METHYLTRANSFERASE RELATED"/>
    <property type="match status" value="1"/>
</dbReference>
<dbReference type="PANTHER" id="PTHR21091:SF169">
    <property type="entry name" value="UROPORPHYRINOGEN DECARBOXYLASE"/>
    <property type="match status" value="1"/>
</dbReference>
<dbReference type="Pfam" id="PF01208">
    <property type="entry name" value="URO-D"/>
    <property type="match status" value="1"/>
</dbReference>
<dbReference type="SUPFAM" id="SSF51726">
    <property type="entry name" value="UROD/MetE-like"/>
    <property type="match status" value="1"/>
</dbReference>
<dbReference type="PROSITE" id="PS00906">
    <property type="entry name" value="UROD_1"/>
    <property type="match status" value="1"/>
</dbReference>
<dbReference type="PROSITE" id="PS00907">
    <property type="entry name" value="UROD_2"/>
    <property type="match status" value="1"/>
</dbReference>
<proteinExistence type="inferred from homology"/>